<geneLocation type="plasmid">
    <name>pRLG202</name>
</geneLocation>
<evidence type="ECO:0000255" key="1">
    <source>
        <dbReference type="HAMAP-Rule" id="MF_00228"/>
    </source>
</evidence>
<name>THIM_RHILW</name>
<gene>
    <name evidence="1" type="primary">thiM</name>
    <name type="ordered locus">Rleg2_5775</name>
</gene>
<keyword id="KW-0067">ATP-binding</keyword>
<keyword id="KW-0418">Kinase</keyword>
<keyword id="KW-0460">Magnesium</keyword>
<keyword id="KW-0479">Metal-binding</keyword>
<keyword id="KW-0547">Nucleotide-binding</keyword>
<keyword id="KW-0614">Plasmid</keyword>
<keyword id="KW-1185">Reference proteome</keyword>
<keyword id="KW-0784">Thiamine biosynthesis</keyword>
<keyword id="KW-0808">Transferase</keyword>
<accession>B6A3G5</accession>
<dbReference type="EC" id="2.7.1.50" evidence="1"/>
<dbReference type="EMBL" id="CP001193">
    <property type="protein sequence ID" value="ACI58948.1"/>
    <property type="molecule type" value="Genomic_DNA"/>
</dbReference>
<dbReference type="RefSeq" id="WP_012555148.1">
    <property type="nucleotide sequence ID" value="NC_011366.1"/>
</dbReference>
<dbReference type="SMR" id="B6A3G5"/>
<dbReference type="KEGG" id="rlt:Rleg2_5775"/>
<dbReference type="HOGENOM" id="CLU_019943_0_1_5"/>
<dbReference type="UniPathway" id="UPA00060">
    <property type="reaction ID" value="UER00139"/>
</dbReference>
<dbReference type="Proteomes" id="UP000008330">
    <property type="component" value="Plasmid pRLG202"/>
</dbReference>
<dbReference type="GO" id="GO:0005524">
    <property type="term" value="F:ATP binding"/>
    <property type="evidence" value="ECO:0007669"/>
    <property type="project" value="UniProtKB-UniRule"/>
</dbReference>
<dbReference type="GO" id="GO:0004417">
    <property type="term" value="F:hydroxyethylthiazole kinase activity"/>
    <property type="evidence" value="ECO:0007669"/>
    <property type="project" value="UniProtKB-UniRule"/>
</dbReference>
<dbReference type="GO" id="GO:0000287">
    <property type="term" value="F:magnesium ion binding"/>
    <property type="evidence" value="ECO:0007669"/>
    <property type="project" value="UniProtKB-UniRule"/>
</dbReference>
<dbReference type="GO" id="GO:0009228">
    <property type="term" value="P:thiamine biosynthetic process"/>
    <property type="evidence" value="ECO:0007669"/>
    <property type="project" value="UniProtKB-KW"/>
</dbReference>
<dbReference type="GO" id="GO:0009229">
    <property type="term" value="P:thiamine diphosphate biosynthetic process"/>
    <property type="evidence" value="ECO:0007669"/>
    <property type="project" value="UniProtKB-UniRule"/>
</dbReference>
<dbReference type="CDD" id="cd01170">
    <property type="entry name" value="THZ_kinase"/>
    <property type="match status" value="1"/>
</dbReference>
<dbReference type="Gene3D" id="3.40.1190.20">
    <property type="match status" value="1"/>
</dbReference>
<dbReference type="HAMAP" id="MF_00228">
    <property type="entry name" value="Thz_kinase"/>
    <property type="match status" value="1"/>
</dbReference>
<dbReference type="InterPro" id="IPR000417">
    <property type="entry name" value="Hyethyz_kinase"/>
</dbReference>
<dbReference type="InterPro" id="IPR029056">
    <property type="entry name" value="Ribokinase-like"/>
</dbReference>
<dbReference type="NCBIfam" id="NF006830">
    <property type="entry name" value="PRK09355.1"/>
    <property type="match status" value="1"/>
</dbReference>
<dbReference type="NCBIfam" id="TIGR00694">
    <property type="entry name" value="thiM"/>
    <property type="match status" value="1"/>
</dbReference>
<dbReference type="Pfam" id="PF02110">
    <property type="entry name" value="HK"/>
    <property type="match status" value="1"/>
</dbReference>
<dbReference type="PIRSF" id="PIRSF000513">
    <property type="entry name" value="Thz_kinase"/>
    <property type="match status" value="1"/>
</dbReference>
<dbReference type="PRINTS" id="PR01099">
    <property type="entry name" value="HYETHTZKNASE"/>
</dbReference>
<dbReference type="SUPFAM" id="SSF53613">
    <property type="entry name" value="Ribokinase-like"/>
    <property type="match status" value="1"/>
</dbReference>
<organism>
    <name type="scientific">Rhizobium leguminosarum bv. trifolii (strain WSM2304)</name>
    <dbReference type="NCBI Taxonomy" id="395492"/>
    <lineage>
        <taxon>Bacteria</taxon>
        <taxon>Pseudomonadati</taxon>
        <taxon>Pseudomonadota</taxon>
        <taxon>Alphaproteobacteria</taxon>
        <taxon>Hyphomicrobiales</taxon>
        <taxon>Rhizobiaceae</taxon>
        <taxon>Rhizobium/Agrobacterium group</taxon>
        <taxon>Rhizobium</taxon>
    </lineage>
</organism>
<protein>
    <recommendedName>
        <fullName evidence="1">Hydroxyethylthiazole kinase</fullName>
        <ecNumber evidence="1">2.7.1.50</ecNumber>
    </recommendedName>
    <alternativeName>
        <fullName evidence="1">4-methyl-5-beta-hydroxyethylthiazole kinase</fullName>
        <shortName evidence="1">TH kinase</shortName>
        <shortName evidence="1">Thz kinase</shortName>
    </alternativeName>
</protein>
<sequence length="267" mass="27216">MQSRTTPGAMLTAMREKPPLVQCITNYVAMNIAANVLLAAGASPAMVHAAEEADEFAGIASALTVNIGTLSTQWIDGMQAAAKATTAAGKPWVLDPVAHYATAFRRDAVAGLLALKPTIIRGNASEIIALAGGESRGQGVDSRDPVEQAEGSARWLAERQQAIVAVTGAVDFVTDGERAVRITGGSALMPQVTALGCSLTCLVGAFAATAPEDLFGATVAALATFAIAGEEAALGAAGPGSFAWRFLDALHALDAETLDARARISAA</sequence>
<feature type="chain" id="PRO_0000383891" description="Hydroxyethylthiazole kinase">
    <location>
        <begin position="1"/>
        <end position="267"/>
    </location>
</feature>
<feature type="binding site" evidence="1">
    <location>
        <position position="46"/>
    </location>
    <ligand>
        <name>substrate</name>
    </ligand>
</feature>
<feature type="binding site" evidence="1">
    <location>
        <position position="121"/>
    </location>
    <ligand>
        <name>ATP</name>
        <dbReference type="ChEBI" id="CHEBI:30616"/>
    </ligand>
</feature>
<feature type="binding site" evidence="1">
    <location>
        <position position="167"/>
    </location>
    <ligand>
        <name>ATP</name>
        <dbReference type="ChEBI" id="CHEBI:30616"/>
    </ligand>
</feature>
<feature type="binding site" evidence="1">
    <location>
        <position position="194"/>
    </location>
    <ligand>
        <name>substrate</name>
    </ligand>
</feature>
<reference key="1">
    <citation type="journal article" date="2010" name="Stand. Genomic Sci.">
        <title>Complete genome sequence of Rhizobium leguminosarum bv trifolii strain WSM2304, an effective microsymbiont of the South American clover Trifolium polymorphum.</title>
        <authorList>
            <person name="Reeve W."/>
            <person name="O'Hara G."/>
            <person name="Chain P."/>
            <person name="Ardley J."/>
            <person name="Brau L."/>
            <person name="Nandesena K."/>
            <person name="Tiwari R."/>
            <person name="Malfatti S."/>
            <person name="Kiss H."/>
            <person name="Lapidus A."/>
            <person name="Copeland A."/>
            <person name="Nolan M."/>
            <person name="Land M."/>
            <person name="Ivanova N."/>
            <person name="Mavromatis K."/>
            <person name="Markowitz V."/>
            <person name="Kyrpides N."/>
            <person name="Melino V."/>
            <person name="Denton M."/>
            <person name="Yates R."/>
            <person name="Howieson J."/>
        </authorList>
    </citation>
    <scope>NUCLEOTIDE SEQUENCE [LARGE SCALE GENOMIC DNA]</scope>
    <source>
        <strain>WSM2304</strain>
    </source>
</reference>
<proteinExistence type="inferred from homology"/>
<comment type="function">
    <text evidence="1">Catalyzes the phosphorylation of the hydroxyl group of 4-methyl-5-beta-hydroxyethylthiazole (THZ).</text>
</comment>
<comment type="catalytic activity">
    <reaction evidence="1">
        <text>5-(2-hydroxyethyl)-4-methylthiazole + ATP = 4-methyl-5-(2-phosphooxyethyl)-thiazole + ADP + H(+)</text>
        <dbReference type="Rhea" id="RHEA:24212"/>
        <dbReference type="ChEBI" id="CHEBI:15378"/>
        <dbReference type="ChEBI" id="CHEBI:17957"/>
        <dbReference type="ChEBI" id="CHEBI:30616"/>
        <dbReference type="ChEBI" id="CHEBI:58296"/>
        <dbReference type="ChEBI" id="CHEBI:456216"/>
        <dbReference type="EC" id="2.7.1.50"/>
    </reaction>
</comment>
<comment type="cofactor">
    <cofactor evidence="1">
        <name>Mg(2+)</name>
        <dbReference type="ChEBI" id="CHEBI:18420"/>
    </cofactor>
</comment>
<comment type="pathway">
    <text evidence="1">Cofactor biosynthesis; thiamine diphosphate biosynthesis; 4-methyl-5-(2-phosphoethyl)-thiazole from 5-(2-hydroxyethyl)-4-methylthiazole: step 1/1.</text>
</comment>
<comment type="similarity">
    <text evidence="1">Belongs to the Thz kinase family.</text>
</comment>